<sequence>MTQDEMKKAAGWAALEYVEAGSIVGVGTGSTVNHFIDALATMKNEIKGAVSSSVASTEKLKELGIEVFDCNDVAGLDVYVDGADEINGKNEMIKGGGAALTREKIVAAISDKFICIVDDTKQVDVLGQFPLPVEVIPMARSYVARELVKLGGDPAYREGVITDNGNVILDVHGMKITDAKDLEDKINALPGVVTVGLFAHRGADVLLVGAPEGVKKFD</sequence>
<feature type="chain" id="PRO_0000158491" description="Ribose-5-phosphate isomerase A">
    <location>
        <begin position="1"/>
        <end position="218"/>
    </location>
</feature>
<feature type="active site" description="Proton acceptor" evidence="1">
    <location>
        <position position="103"/>
    </location>
</feature>
<feature type="binding site" evidence="1">
    <location>
        <begin position="28"/>
        <end position="31"/>
    </location>
    <ligand>
        <name>substrate</name>
    </ligand>
</feature>
<feature type="binding site" evidence="1">
    <location>
        <begin position="81"/>
        <end position="84"/>
    </location>
    <ligand>
        <name>substrate</name>
    </ligand>
</feature>
<feature type="binding site" evidence="1">
    <location>
        <begin position="94"/>
        <end position="97"/>
    </location>
    <ligand>
        <name>substrate</name>
    </ligand>
</feature>
<feature type="binding site" evidence="1">
    <location>
        <position position="121"/>
    </location>
    <ligand>
        <name>substrate</name>
    </ligand>
</feature>
<protein>
    <recommendedName>
        <fullName evidence="1">Ribose-5-phosphate isomerase A</fullName>
        <ecNumber evidence="1">5.3.1.6</ecNumber>
    </recommendedName>
    <alternativeName>
        <fullName evidence="1">Phosphoriboisomerase A</fullName>
        <shortName evidence="1">PRI</shortName>
    </alternativeName>
</protein>
<organism>
    <name type="scientific">Aliivibrio fischeri (strain ATCC 700601 / ES114)</name>
    <name type="common">Vibrio fischeri</name>
    <dbReference type="NCBI Taxonomy" id="312309"/>
    <lineage>
        <taxon>Bacteria</taxon>
        <taxon>Pseudomonadati</taxon>
        <taxon>Pseudomonadota</taxon>
        <taxon>Gammaproteobacteria</taxon>
        <taxon>Vibrionales</taxon>
        <taxon>Vibrionaceae</taxon>
        <taxon>Aliivibrio</taxon>
    </lineage>
</organism>
<gene>
    <name evidence="1" type="primary">rpiA</name>
    <name type="ordered locus">VF_2105</name>
</gene>
<accession>Q5E2Z6</accession>
<comment type="function">
    <text evidence="1">Catalyzes the reversible conversion of ribose-5-phosphate to ribulose 5-phosphate.</text>
</comment>
<comment type="catalytic activity">
    <reaction evidence="1">
        <text>aldehydo-D-ribose 5-phosphate = D-ribulose 5-phosphate</text>
        <dbReference type="Rhea" id="RHEA:14657"/>
        <dbReference type="ChEBI" id="CHEBI:58121"/>
        <dbReference type="ChEBI" id="CHEBI:58273"/>
        <dbReference type="EC" id="5.3.1.6"/>
    </reaction>
</comment>
<comment type="pathway">
    <text evidence="1">Carbohydrate degradation; pentose phosphate pathway; D-ribose 5-phosphate from D-ribulose 5-phosphate (non-oxidative stage): step 1/1.</text>
</comment>
<comment type="subunit">
    <text evidence="1">Homodimer.</text>
</comment>
<comment type="similarity">
    <text evidence="1">Belongs to the ribose 5-phosphate isomerase family.</text>
</comment>
<proteinExistence type="inferred from homology"/>
<keyword id="KW-0413">Isomerase</keyword>
<keyword id="KW-1185">Reference proteome</keyword>
<reference key="1">
    <citation type="journal article" date="2005" name="Proc. Natl. Acad. Sci. U.S.A.">
        <title>Complete genome sequence of Vibrio fischeri: a symbiotic bacterium with pathogenic congeners.</title>
        <authorList>
            <person name="Ruby E.G."/>
            <person name="Urbanowski M."/>
            <person name="Campbell J."/>
            <person name="Dunn A."/>
            <person name="Faini M."/>
            <person name="Gunsalus R."/>
            <person name="Lostroh P."/>
            <person name="Lupp C."/>
            <person name="McCann J."/>
            <person name="Millikan D."/>
            <person name="Schaefer A."/>
            <person name="Stabb E."/>
            <person name="Stevens A."/>
            <person name="Visick K."/>
            <person name="Whistler C."/>
            <person name="Greenberg E.P."/>
        </authorList>
    </citation>
    <scope>NUCLEOTIDE SEQUENCE [LARGE SCALE GENOMIC DNA]</scope>
    <source>
        <strain>ATCC 700601 / ES114</strain>
    </source>
</reference>
<name>RPIA_ALIF1</name>
<evidence type="ECO:0000255" key="1">
    <source>
        <dbReference type="HAMAP-Rule" id="MF_00170"/>
    </source>
</evidence>
<dbReference type="EC" id="5.3.1.6" evidence="1"/>
<dbReference type="EMBL" id="CP000020">
    <property type="protein sequence ID" value="AAW86600.1"/>
    <property type="molecule type" value="Genomic_DNA"/>
</dbReference>
<dbReference type="RefSeq" id="WP_005420746.1">
    <property type="nucleotide sequence ID" value="NZ_CAWLES010000001.1"/>
</dbReference>
<dbReference type="RefSeq" id="YP_205488.1">
    <property type="nucleotide sequence ID" value="NC_006840.2"/>
</dbReference>
<dbReference type="SMR" id="Q5E2Z6"/>
<dbReference type="STRING" id="312309.VF_2105"/>
<dbReference type="EnsemblBacteria" id="AAW86600">
    <property type="protein sequence ID" value="AAW86600"/>
    <property type="gene ID" value="VF_2105"/>
</dbReference>
<dbReference type="GeneID" id="54164811"/>
<dbReference type="KEGG" id="vfi:VF_2105"/>
<dbReference type="PATRIC" id="fig|312309.11.peg.2147"/>
<dbReference type="eggNOG" id="COG0120">
    <property type="taxonomic scope" value="Bacteria"/>
</dbReference>
<dbReference type="HOGENOM" id="CLU_056590_1_1_6"/>
<dbReference type="OrthoDB" id="5870696at2"/>
<dbReference type="UniPathway" id="UPA00115">
    <property type="reaction ID" value="UER00412"/>
</dbReference>
<dbReference type="Proteomes" id="UP000000537">
    <property type="component" value="Chromosome I"/>
</dbReference>
<dbReference type="GO" id="GO:0005829">
    <property type="term" value="C:cytosol"/>
    <property type="evidence" value="ECO:0007669"/>
    <property type="project" value="TreeGrafter"/>
</dbReference>
<dbReference type="GO" id="GO:0004751">
    <property type="term" value="F:ribose-5-phosphate isomerase activity"/>
    <property type="evidence" value="ECO:0007669"/>
    <property type="project" value="UniProtKB-UniRule"/>
</dbReference>
<dbReference type="GO" id="GO:0006014">
    <property type="term" value="P:D-ribose metabolic process"/>
    <property type="evidence" value="ECO:0007669"/>
    <property type="project" value="TreeGrafter"/>
</dbReference>
<dbReference type="GO" id="GO:0009052">
    <property type="term" value="P:pentose-phosphate shunt, non-oxidative branch"/>
    <property type="evidence" value="ECO:0007669"/>
    <property type="project" value="UniProtKB-UniRule"/>
</dbReference>
<dbReference type="CDD" id="cd01398">
    <property type="entry name" value="RPI_A"/>
    <property type="match status" value="1"/>
</dbReference>
<dbReference type="FunFam" id="3.30.70.260:FF:000004">
    <property type="entry name" value="Ribose-5-phosphate isomerase A"/>
    <property type="match status" value="1"/>
</dbReference>
<dbReference type="FunFam" id="3.40.50.1360:FF:000001">
    <property type="entry name" value="Ribose-5-phosphate isomerase A"/>
    <property type="match status" value="1"/>
</dbReference>
<dbReference type="Gene3D" id="3.30.70.260">
    <property type="match status" value="1"/>
</dbReference>
<dbReference type="Gene3D" id="3.40.50.1360">
    <property type="match status" value="1"/>
</dbReference>
<dbReference type="HAMAP" id="MF_00170">
    <property type="entry name" value="Rib_5P_isom_A"/>
    <property type="match status" value="1"/>
</dbReference>
<dbReference type="InterPro" id="IPR037171">
    <property type="entry name" value="NagB/RpiA_transferase-like"/>
</dbReference>
<dbReference type="InterPro" id="IPR020672">
    <property type="entry name" value="Ribose5P_isomerase_typA_subgr"/>
</dbReference>
<dbReference type="InterPro" id="IPR004788">
    <property type="entry name" value="Ribose5P_isomerase_type_A"/>
</dbReference>
<dbReference type="NCBIfam" id="NF001924">
    <property type="entry name" value="PRK00702.1"/>
    <property type="match status" value="1"/>
</dbReference>
<dbReference type="NCBIfam" id="TIGR00021">
    <property type="entry name" value="rpiA"/>
    <property type="match status" value="1"/>
</dbReference>
<dbReference type="PANTHER" id="PTHR11934">
    <property type="entry name" value="RIBOSE-5-PHOSPHATE ISOMERASE"/>
    <property type="match status" value="1"/>
</dbReference>
<dbReference type="PANTHER" id="PTHR11934:SF0">
    <property type="entry name" value="RIBOSE-5-PHOSPHATE ISOMERASE"/>
    <property type="match status" value="1"/>
</dbReference>
<dbReference type="Pfam" id="PF06026">
    <property type="entry name" value="Rib_5-P_isom_A"/>
    <property type="match status" value="1"/>
</dbReference>
<dbReference type="SUPFAM" id="SSF75445">
    <property type="entry name" value="D-ribose-5-phosphate isomerase (RpiA), lid domain"/>
    <property type="match status" value="1"/>
</dbReference>
<dbReference type="SUPFAM" id="SSF100950">
    <property type="entry name" value="NagB/RpiA/CoA transferase-like"/>
    <property type="match status" value="1"/>
</dbReference>